<name>KLF1_MOUSE</name>
<organism>
    <name type="scientific">Mus musculus</name>
    <name type="common">Mouse</name>
    <dbReference type="NCBI Taxonomy" id="10090"/>
    <lineage>
        <taxon>Eukaryota</taxon>
        <taxon>Metazoa</taxon>
        <taxon>Chordata</taxon>
        <taxon>Craniata</taxon>
        <taxon>Vertebrata</taxon>
        <taxon>Euteleostomi</taxon>
        <taxon>Mammalia</taxon>
        <taxon>Eutheria</taxon>
        <taxon>Euarchontoglires</taxon>
        <taxon>Glires</taxon>
        <taxon>Rodentia</taxon>
        <taxon>Myomorpha</taxon>
        <taxon>Muroidea</taxon>
        <taxon>Muridae</taxon>
        <taxon>Murinae</taxon>
        <taxon>Mus</taxon>
        <taxon>Mus</taxon>
    </lineage>
</organism>
<gene>
    <name type="primary">Klf1</name>
    <name type="synonym">Elkf</name>
</gene>
<sequence length="358" mass="37757">MASAETVLPSISTLTTLGQFLDTQEDFLKWWRSEETQDLGPGPPNPTGPSLHVSLKSEDPSGEDDERDVTCAWDPDLFLTNFPGSESPGTSRTCALAPSVGPVAQFEPPESLGAYAGGPGLVTGPLGSEEHTSWAHPTPRPPAPEPFVAPALAPGLAPKAQPSYSDSRAGSVGGFFPRAGLAVPAAPGAPYGLLSGYPALYPAPQYQGHFQLFRGLAAPSAGGTAPPSFLNCLGPGTVATELGATAIAGDAGLSPGTAPPKRSRRTLAPKRQAAHTCGHEGCGKSYSKSSHLKAHLRTHTGEKPYACSWDGCDWRFARSDELTRHYRKHTGHRPFCCGLCPRAFSRSDHLALHMKRHL</sequence>
<feature type="chain" id="PRO_0000047161" description="Krueppel-like factor 1">
    <location>
        <begin position="1"/>
        <end position="358"/>
    </location>
</feature>
<feature type="zinc finger region" description="C2H2-type 1" evidence="3">
    <location>
        <begin position="275"/>
        <end position="299"/>
    </location>
</feature>
<feature type="zinc finger region" description="C2H2-type 2" evidence="3">
    <location>
        <begin position="305"/>
        <end position="329"/>
    </location>
</feature>
<feature type="zinc finger region" description="C2H2-type 3" evidence="3">
    <location>
        <begin position="335"/>
        <end position="357"/>
    </location>
</feature>
<feature type="region of interest" description="Disordered" evidence="4">
    <location>
        <begin position="35"/>
        <end position="69"/>
    </location>
</feature>
<feature type="short sequence motif" description="9aaTAD" evidence="2">
    <location>
        <begin position="71"/>
        <end position="79"/>
    </location>
</feature>
<feature type="modified residue" description="Phosphothreonine; by CK2" evidence="12">
    <location>
        <position position="23"/>
    </location>
</feature>
<feature type="modified residue" description="Omega-N-methylarginine" evidence="13">
    <location>
        <position position="178"/>
    </location>
</feature>
<feature type="modified residue" description="N6-acetyllysine" evidence="5">
    <location>
        <position position="270"/>
    </location>
</feature>
<feature type="modified residue" description="N6-acetyllysine" evidence="5">
    <location>
        <position position="284"/>
    </location>
</feature>
<feature type="cross-link" description="Glycyl lysine isopeptide (Lys-Gly) (interchain with G-Cter in SUMO)">
    <location>
        <position position="56"/>
    </location>
</feature>
<feature type="mutagenesis site" description="Greatly reduced transactivation activity." evidence="10">
    <original>T</original>
    <variation>A</variation>
    <location>
        <position position="23"/>
    </location>
</feature>
<feature type="mutagenesis site" description="No change in transactivation activity." evidence="10">
    <original>T</original>
    <variation>D</variation>
    <location>
        <position position="23"/>
    </location>
</feature>
<feature type="mutagenesis site" description="Abolishes most of transactivation activity." evidence="10">
    <original>ED</original>
    <variation>AG</variation>
    <location>
        <begin position="25"/>
        <end position="26"/>
    </location>
</feature>
<feature type="mutagenesis site" description="Abolishes sumoylation. No change in nuclear localization but no colocalization with SUMO1. Reduces inhibition of megakaryocytic differentiation. No decrease in bone marrow precursors to form megakaryocytic colonies. No effect on erythroid differentiation." evidence="7">
    <original>K</original>
    <variation>R</variation>
    <location>
        <position position="56"/>
    </location>
</feature>
<feature type="mutagenesis site" description="No effect on DNA binding. Transactivation activity reduced by 50%. Loss of superactivation by CBP of EP300." evidence="5">
    <original>K</original>
    <variation>A</variation>
    <variation>R</variation>
    <location>
        <position position="270"/>
    </location>
</feature>
<feature type="mutagenesis site" description="No effect on DNA binding. No change in transactivation activity. No loss of superactivation by CBP or EP300." evidence="5 6">
    <original>K</original>
    <variation>A</variation>
    <variation>R</variation>
    <location>
        <position position="284"/>
    </location>
</feature>
<feature type="mutagenesis site" description="Loss of DNA binding and transactivation activity. No change in interaction with SIN3A nor with HDAC1. No effect on repressive activity." evidence="6">
    <original>H</original>
    <variation>N</variation>
    <location>
        <position position="295"/>
    </location>
</feature>
<feature type="mutagenesis site" description="Alters DNA-binding specificity resulting in ectopic transcription of non-erythroid genes." evidence="8 9">
    <original>E</original>
    <variation>K</variation>
    <location>
        <position position="321"/>
    </location>
</feature>
<feature type="mutagenesis site" description="Loss of DNA binding and transactivation activity. No change in interaction with SIN3A nor with HDAC1. No effect on repressive activity." evidence="6">
    <original>H</original>
    <variation>N</variation>
    <location>
        <position position="325"/>
    </location>
</feature>
<feature type="mutagenesis site" description="Loss of DNA binding and transactivation activity. No change in interaction with SIN3A nor with HDAC1. No effect on repressive activity." evidence="6">
    <original>H</original>
    <variation>N</variation>
    <location>
        <position position="353"/>
    </location>
</feature>
<feature type="sequence conflict" description="In Ref. 3; AAC24497." evidence="11" ref="3">
    <original>C</original>
    <variation>Y</variation>
    <location>
        <position position="94"/>
    </location>
</feature>
<feature type="sequence conflict" description="In Ref. 3; AAC24497." evidence="11" ref="3">
    <original>A</original>
    <variation>T</variation>
    <location>
        <position position="116"/>
    </location>
</feature>
<feature type="sequence conflict" description="In Ref. 3; AAC24497." evidence="11" ref="3">
    <original>G</original>
    <variation>P</variation>
    <location>
        <position position="223"/>
    </location>
</feature>
<feature type="sequence conflict" description="In Ref. 3; AAC24497." evidence="11" ref="3">
    <original>S</original>
    <variation>T</variation>
    <location>
        <position position="287"/>
    </location>
</feature>
<dbReference type="EMBL" id="M97200">
    <property type="protein sequence ID" value="AAA37546.1"/>
    <property type="status" value="ALT_INIT"/>
    <property type="molecule type" value="mRNA"/>
</dbReference>
<dbReference type="EMBL" id="AF019074">
    <property type="protein sequence ID" value="AAB87861.1"/>
    <property type="molecule type" value="Genomic_DNA"/>
</dbReference>
<dbReference type="EMBL" id="AF033102">
    <property type="protein sequence ID" value="AAC24497.1"/>
    <property type="molecule type" value="Genomic_DNA"/>
</dbReference>
<dbReference type="CCDS" id="CCDS22483.1"/>
<dbReference type="PIR" id="A48060">
    <property type="entry name" value="A48060"/>
</dbReference>
<dbReference type="SMR" id="P46099"/>
<dbReference type="DIP" id="DIP-48738N"/>
<dbReference type="FunCoup" id="P46099">
    <property type="interactions" value="545"/>
</dbReference>
<dbReference type="IntAct" id="P46099">
    <property type="interactions" value="2"/>
</dbReference>
<dbReference type="STRING" id="10090.ENSMUSP00000064366"/>
<dbReference type="iPTMnet" id="P46099"/>
<dbReference type="PhosphoSitePlus" id="P46099"/>
<dbReference type="PaxDb" id="10090-ENSMUSP00000064366"/>
<dbReference type="ProteomicsDB" id="269222"/>
<dbReference type="AGR" id="MGI:1342771"/>
<dbReference type="MGI" id="MGI:1342771">
    <property type="gene designation" value="Klf1"/>
</dbReference>
<dbReference type="eggNOG" id="KOG1721">
    <property type="taxonomic scope" value="Eukaryota"/>
</dbReference>
<dbReference type="InParanoid" id="P46099"/>
<dbReference type="PhylomeDB" id="P46099"/>
<dbReference type="PRO" id="PR:P46099"/>
<dbReference type="Proteomes" id="UP000000589">
    <property type="component" value="Unplaced"/>
</dbReference>
<dbReference type="RNAct" id="P46099">
    <property type="molecule type" value="protein"/>
</dbReference>
<dbReference type="GO" id="GO:0005634">
    <property type="term" value="C:nucleus"/>
    <property type="evidence" value="ECO:0000250"/>
    <property type="project" value="UniProtKB"/>
</dbReference>
<dbReference type="GO" id="GO:0003677">
    <property type="term" value="F:DNA binding"/>
    <property type="evidence" value="ECO:0000314"/>
    <property type="project" value="MGI"/>
</dbReference>
<dbReference type="GO" id="GO:0001228">
    <property type="term" value="F:DNA-binding transcription activator activity, RNA polymerase II-specific"/>
    <property type="evidence" value="ECO:0000314"/>
    <property type="project" value="NTNU_SB"/>
</dbReference>
<dbReference type="GO" id="GO:0003700">
    <property type="term" value="F:DNA-binding transcription factor activity"/>
    <property type="evidence" value="ECO:0000315"/>
    <property type="project" value="MGI"/>
</dbReference>
<dbReference type="GO" id="GO:0140297">
    <property type="term" value="F:DNA-binding transcription factor binding"/>
    <property type="evidence" value="ECO:0000353"/>
    <property type="project" value="BHF-UCL"/>
</dbReference>
<dbReference type="GO" id="GO:0019904">
    <property type="term" value="F:protein domain specific binding"/>
    <property type="evidence" value="ECO:0000353"/>
    <property type="project" value="BHF-UCL"/>
</dbReference>
<dbReference type="GO" id="GO:0000978">
    <property type="term" value="F:RNA polymerase II cis-regulatory region sequence-specific DNA binding"/>
    <property type="evidence" value="ECO:0000314"/>
    <property type="project" value="NTNU_SB"/>
</dbReference>
<dbReference type="GO" id="GO:0008270">
    <property type="term" value="F:zinc ion binding"/>
    <property type="evidence" value="ECO:0007669"/>
    <property type="project" value="UniProtKB-KW"/>
</dbReference>
<dbReference type="GO" id="GO:0006338">
    <property type="term" value="P:chromatin remodeling"/>
    <property type="evidence" value="ECO:0000314"/>
    <property type="project" value="MGI"/>
</dbReference>
<dbReference type="GO" id="GO:0035162">
    <property type="term" value="P:embryonic hemopoiesis"/>
    <property type="evidence" value="ECO:0000315"/>
    <property type="project" value="MGI"/>
</dbReference>
<dbReference type="GO" id="GO:0048821">
    <property type="term" value="P:erythrocyte development"/>
    <property type="evidence" value="ECO:0000315"/>
    <property type="project" value="MGI"/>
</dbReference>
<dbReference type="GO" id="GO:0030218">
    <property type="term" value="P:erythrocyte differentiation"/>
    <property type="evidence" value="ECO:0000315"/>
    <property type="project" value="MGI"/>
</dbReference>
<dbReference type="GO" id="GO:0043249">
    <property type="term" value="P:erythrocyte maturation"/>
    <property type="evidence" value="ECO:0000315"/>
    <property type="project" value="MGI"/>
</dbReference>
<dbReference type="GO" id="GO:0001701">
    <property type="term" value="P:in utero embryonic development"/>
    <property type="evidence" value="ECO:0000315"/>
    <property type="project" value="MGI"/>
</dbReference>
<dbReference type="GO" id="GO:0001889">
    <property type="term" value="P:liver development"/>
    <property type="evidence" value="ECO:0000315"/>
    <property type="project" value="MGI"/>
</dbReference>
<dbReference type="GO" id="GO:0045893">
    <property type="term" value="P:positive regulation of DNA-templated transcription"/>
    <property type="evidence" value="ECO:0000314"/>
    <property type="project" value="BHF-UCL"/>
</dbReference>
<dbReference type="GO" id="GO:0010628">
    <property type="term" value="P:positive regulation of gene expression"/>
    <property type="evidence" value="ECO:0000315"/>
    <property type="project" value="MGI"/>
</dbReference>
<dbReference type="GO" id="GO:0045944">
    <property type="term" value="P:positive regulation of transcription by RNA polymerase II"/>
    <property type="evidence" value="ECO:0000314"/>
    <property type="project" value="BHF-UCL"/>
</dbReference>
<dbReference type="CDD" id="cd21581">
    <property type="entry name" value="KLF1_N"/>
    <property type="match status" value="1"/>
</dbReference>
<dbReference type="FunFam" id="3.30.160.60:FF:000018">
    <property type="entry name" value="Krueppel-like factor 15"/>
    <property type="match status" value="1"/>
</dbReference>
<dbReference type="FunFam" id="3.30.160.60:FF:000237">
    <property type="entry name" value="Krueppel-like factor 2"/>
    <property type="match status" value="1"/>
</dbReference>
<dbReference type="FunFam" id="3.30.160.60:FF:000446">
    <property type="entry name" value="Zinc finger protein"/>
    <property type="match status" value="1"/>
</dbReference>
<dbReference type="Gene3D" id="3.30.160.60">
    <property type="entry name" value="Classic Zinc Finger"/>
    <property type="match status" value="3"/>
</dbReference>
<dbReference type="InterPro" id="IPR031786">
    <property type="entry name" value="EKLF_TAD1"/>
</dbReference>
<dbReference type="InterPro" id="IPR031784">
    <property type="entry name" value="EKLF_TAD2"/>
</dbReference>
<dbReference type="InterPro" id="IPR036236">
    <property type="entry name" value="Znf_C2H2_sf"/>
</dbReference>
<dbReference type="InterPro" id="IPR013087">
    <property type="entry name" value="Znf_C2H2_type"/>
</dbReference>
<dbReference type="PANTHER" id="PTHR23235:SF133">
    <property type="entry name" value="KRUEPPEL-LIKE FACTOR 1"/>
    <property type="match status" value="1"/>
</dbReference>
<dbReference type="PANTHER" id="PTHR23235">
    <property type="entry name" value="KRUEPPEL-LIKE TRANSCRIPTION FACTOR"/>
    <property type="match status" value="1"/>
</dbReference>
<dbReference type="Pfam" id="PF16832">
    <property type="entry name" value="EKLF_TAD1"/>
    <property type="match status" value="1"/>
</dbReference>
<dbReference type="Pfam" id="PF16833">
    <property type="entry name" value="EKLF_TAD2"/>
    <property type="match status" value="1"/>
</dbReference>
<dbReference type="Pfam" id="PF00096">
    <property type="entry name" value="zf-C2H2"/>
    <property type="match status" value="3"/>
</dbReference>
<dbReference type="SMART" id="SM00355">
    <property type="entry name" value="ZnF_C2H2"/>
    <property type="match status" value="3"/>
</dbReference>
<dbReference type="SUPFAM" id="SSF57667">
    <property type="entry name" value="beta-beta-alpha zinc fingers"/>
    <property type="match status" value="2"/>
</dbReference>
<dbReference type="PROSITE" id="PS00028">
    <property type="entry name" value="ZINC_FINGER_C2H2_1"/>
    <property type="match status" value="3"/>
</dbReference>
<dbReference type="PROSITE" id="PS50157">
    <property type="entry name" value="ZINC_FINGER_C2H2_2"/>
    <property type="match status" value="3"/>
</dbReference>
<proteinExistence type="evidence at protein level"/>
<protein>
    <recommendedName>
        <fullName>Krueppel-like factor 1</fullName>
    </recommendedName>
    <alternativeName>
        <fullName>Erythroid krueppel-like transcription factor</fullName>
        <shortName>EKLF</shortName>
    </alternativeName>
</protein>
<comment type="function">
    <text evidence="5 6 7 10">Transcription regulator of erythrocyte development. Binds to the CACCC box in the beta-globin gene promoter and activates transcription. Probably serves as a general switch factor for erythroid development. When sumoylated, acts as a transcriptional repressor by promoting interaction with CDH2/MI2beta and also represses megakaryocytic differentiation.</text>
</comment>
<comment type="subunit">
    <text evidence="1 6 7">Interacts with CBP and EP300; the interactions enhance the transactivation activity. Interacts with PCAF; the interaction does not acetylate EKLF and inhibits its transactivation activity (By similarity). Interacts with CDH4; the interaction is SUMO-dependent and leads to transcriptional repression.</text>
</comment>
<comment type="interaction">
    <interactant intactId="EBI-15761537">
        <id>P46099</id>
    </interactant>
    <interactant intactId="EBI-712521">
        <id>Q16594</id>
        <label>TAF9</label>
    </interactant>
    <organismsDiffer>true</organismsDiffer>
    <experiments>3</experiments>
</comment>
<comment type="subcellular location">
    <subcellularLocation>
        <location>Nucleus</location>
    </subcellularLocation>
    <text>Colocalizes with SUMO1 in nuclear speckles.</text>
</comment>
<comment type="tissue specificity">
    <text>Erythroid-specific. Only expressed in bone marrow and spleen.</text>
</comment>
<comment type="domain">
    <text evidence="2">The 9aaTAD motif is a transactivation domain present in a large number of yeast and animal transcription factors.</text>
</comment>
<comment type="PTM">
    <text evidence="5">Acetylated; can be acetylated on both Lys-270 and Lys-288. Acetylation on Lys-270 (by CBP) appears to be the major site affecting EKLF transactivation activity.</text>
</comment>
<comment type="PTM">
    <text evidence="7">Sumoylated; sumoylation, promoted by PIAS1, leads to repression of megakaryocyte differentiation. Also promotes the interaction with the CDH4 subunit of the NuRD repression complex.</text>
</comment>
<comment type="PTM">
    <text evidence="10">Phosphorylated primarily on serine residues in the transactivation domain. Phosphorylation on Thr-23 is critical for the transactivation activity.</text>
</comment>
<comment type="similarity">
    <text evidence="11">Belongs to the krueppel C2H2-type zinc-finger protein family.</text>
</comment>
<comment type="sequence caution" evidence="11">
    <conflict type="erroneous initiation">
        <sequence resource="EMBL-CDS" id="AAA37546"/>
    </conflict>
</comment>
<keyword id="KW-0007">Acetylation</keyword>
<keyword id="KW-0010">Activator</keyword>
<keyword id="KW-0238">DNA-binding</keyword>
<keyword id="KW-1017">Isopeptide bond</keyword>
<keyword id="KW-0479">Metal-binding</keyword>
<keyword id="KW-0488">Methylation</keyword>
<keyword id="KW-0539">Nucleus</keyword>
<keyword id="KW-0597">Phosphoprotein</keyword>
<keyword id="KW-1185">Reference proteome</keyword>
<keyword id="KW-0677">Repeat</keyword>
<keyword id="KW-0804">Transcription</keyword>
<keyword id="KW-0805">Transcription regulation</keyword>
<keyword id="KW-0832">Ubl conjugation</keyword>
<keyword id="KW-0862">Zinc</keyword>
<keyword id="KW-0863">Zinc-finger</keyword>
<reference key="1">
    <citation type="journal article" date="1993" name="Mol. Cell. Biol.">
        <title>A novel, erythroid cell-specific murine transcription factor that binds to the CACCC element and is related to the Kruppel family of nuclear proteins.</title>
        <authorList>
            <person name="Miller I.J."/>
            <person name="Bieker J.J."/>
        </authorList>
    </citation>
    <scope>NUCLEOTIDE SEQUENCE [MRNA]</scope>
</reference>
<reference key="2">
    <citation type="submission" date="1997-08" db="EMBL/GenBank/DDBJ databases">
        <authorList>
            <person name="Jenkins N.A."/>
            <person name="Gilbert D.J."/>
            <person name="Copeland N.G."/>
            <person name="Gruzglin E."/>
            <person name="Bieker J.J."/>
        </authorList>
    </citation>
    <scope>NUCLEOTIDE SEQUENCE [GENOMIC DNA]</scope>
    <source>
        <strain>129</strain>
    </source>
</reference>
<reference key="3">
    <citation type="journal article" date="1995" name="Mol. Cell. Biol.">
        <title>Isolation of a gene encoding a functional zinc finger protein homologous to erythroid Kruppel-like factor: identification of a new multigene family.</title>
        <authorList>
            <person name="Anderson K.P."/>
            <person name="Kern C.B."/>
            <person name="Crable S.C."/>
            <person name="Lingrel J.B."/>
        </authorList>
    </citation>
    <scope>NUCLEOTIDE SEQUENCE [GENOMIC DNA]</scope>
    <source>
        <strain>129</strain>
    </source>
</reference>
<reference key="4">
    <citation type="journal article" date="1998" name="J. Biol. Chem.">
        <title>Regulation of erythroid Krueppel-like factor (EKLF) transcriptional activity by phosphorylation of a protein kinase casein kinase II site within its interaction domain.</title>
        <authorList>
            <person name="Ouyang L."/>
            <person name="Chen X."/>
            <person name="Bieker J.J."/>
        </authorList>
    </citation>
    <scope>PHOSPHORYLATION AT THR-23</scope>
    <scope>FUNCTION</scope>
    <scope>MUTAGENESIS OF THR-23 AND 25-GLU-ASP-26</scope>
</reference>
<reference key="5">
    <citation type="journal article" date="2001" name="Mol. Cell. Biol.">
        <title>Site-specific acetylation by p300 or CREB binding protein regulates erythroid Krueppel-like factor transcriptional activity via its interaction with the SWI-SNF complex.</title>
        <authorList>
            <person name="Zhang W."/>
            <person name="Kadam S."/>
            <person name="Emerson B.M."/>
            <person name="Bieker J.J."/>
        </authorList>
    </citation>
    <scope>ACETYLATION AT LYS-270 AND LYS-284</scope>
    <scope>FUNCTION</scope>
    <scope>MUTAGENESIS OF LYS-270 AND LYS-284</scope>
</reference>
<reference key="6">
    <citation type="journal article" date="2004" name="Mol. Cell. Biol.">
        <title>Stage-specific repression by the EKLF transcriptional activator.</title>
        <authorList>
            <person name="Chen X."/>
            <person name="Bieker J.J."/>
        </authorList>
    </citation>
    <scope>FUNCTION</scope>
    <scope>INTERACTION WITH SIN3A AND HDAC1</scope>
    <scope>MUTAGENESIS OF LYS-284; HIS-295; HIS-325 AND HIS-353</scope>
</reference>
<reference key="7">
    <citation type="journal article" date="2007" name="Mol. Cell. Biol.">
        <title>Sumoylation of EKLF promotes transcriptional repression and is involved in inhibition of megakaryopoiesis.</title>
        <authorList>
            <person name="Siatecka M."/>
            <person name="Xue L."/>
            <person name="Bieker J.J."/>
        </authorList>
    </citation>
    <scope>SUMOYLATION AT LYS-56</scope>
    <scope>INTERACTION WITH CHD4</scope>
    <scope>FUNCTION</scope>
    <scope>MUTAGENESIS OF LYS-56</scope>
</reference>
<reference key="8">
    <citation type="journal article" date="2010" name="Cell">
        <title>A tissue-specific atlas of mouse protein phosphorylation and expression.</title>
        <authorList>
            <person name="Huttlin E.L."/>
            <person name="Jedrychowski M.P."/>
            <person name="Elias J.E."/>
            <person name="Goswami T."/>
            <person name="Rad R."/>
            <person name="Beausoleil S.A."/>
            <person name="Villen J."/>
            <person name="Haas W."/>
            <person name="Sowa M.E."/>
            <person name="Gygi S.P."/>
        </authorList>
    </citation>
    <scope>IDENTIFICATION BY MASS SPECTROMETRY [LARGE SCALE ANALYSIS]</scope>
    <source>
        <tissue>Spleen</tissue>
    </source>
</reference>
<reference key="9">
    <citation type="journal article" date="2014" name="Mol. Cell. Proteomics">
        <title>Immunoaffinity enrichment and mass spectrometry analysis of protein methylation.</title>
        <authorList>
            <person name="Guo A."/>
            <person name="Gu H."/>
            <person name="Zhou J."/>
            <person name="Mulhern D."/>
            <person name="Wang Y."/>
            <person name="Lee K.A."/>
            <person name="Yang V."/>
            <person name="Aguiar M."/>
            <person name="Kornhauser J."/>
            <person name="Jia X."/>
            <person name="Ren J."/>
            <person name="Beausoleil S.A."/>
            <person name="Silva J.C."/>
            <person name="Vemulapalli V."/>
            <person name="Bedford M.T."/>
            <person name="Comb M.J."/>
        </authorList>
    </citation>
    <scope>METHYLATION [LARGE SCALE ANALYSIS] AT ARG-178</scope>
    <scope>IDENTIFICATION BY MASS SPECTROMETRY [LARGE SCALE ANALYSIS]</scope>
    <source>
        <tissue>Embryo</tissue>
    </source>
</reference>
<reference key="10">
    <citation type="journal article" date="2019" name="BMC Genomics">
        <title>Corrupted DNA-binding specificity and ectopic transcription underpin dominant neomorphic mutations in KLF/SP transcription factors.</title>
        <authorList>
            <person name="Ilsley M.D."/>
            <person name="Huang S."/>
            <person name="Magor G.W."/>
            <person name="Landsberg M.J."/>
            <person name="Gillinder K.R."/>
            <person name="Perkins A.C."/>
        </authorList>
    </citation>
    <scope>MUTAGENESIS OF GLU-321</scope>
</reference>
<reference key="11">
    <citation type="journal article" date="2020" name="Mol. Cell. Biol.">
        <title>A Krueppel-like factor 1 (KLF1) Mutation Associated with Severe Congenital Dyserythropoietic Anemia Alters Its DNA-Binding Specificity.</title>
        <authorList>
            <person name="Kulczynska K."/>
            <person name="Bieker J.J."/>
            <person name="Siatecka M."/>
        </authorList>
    </citation>
    <scope>MUTAGENESIS OF GLU-321</scope>
</reference>
<evidence type="ECO:0000250" key="1"/>
<evidence type="ECO:0000250" key="2">
    <source>
        <dbReference type="UniProtKB" id="Q13351"/>
    </source>
</evidence>
<evidence type="ECO:0000255" key="3">
    <source>
        <dbReference type="PROSITE-ProRule" id="PRU00042"/>
    </source>
</evidence>
<evidence type="ECO:0000256" key="4">
    <source>
        <dbReference type="SAM" id="MobiDB-lite"/>
    </source>
</evidence>
<evidence type="ECO:0000269" key="5">
    <source>
    </source>
</evidence>
<evidence type="ECO:0000269" key="6">
    <source>
    </source>
</evidence>
<evidence type="ECO:0000269" key="7">
    <source>
    </source>
</evidence>
<evidence type="ECO:0000269" key="8">
    <source>
    </source>
</evidence>
<evidence type="ECO:0000269" key="9">
    <source>
    </source>
</evidence>
<evidence type="ECO:0000269" key="10">
    <source>
    </source>
</evidence>
<evidence type="ECO:0000305" key="11"/>
<evidence type="ECO:0000305" key="12">
    <source>
    </source>
</evidence>
<evidence type="ECO:0007744" key="13">
    <source>
    </source>
</evidence>
<accession>P46099</accession>
<accession>O70261</accession>